<keyword id="KW-0008">Acetylcholine receptor inhibiting toxin</keyword>
<keyword id="KW-0027">Amidation</keyword>
<keyword id="KW-0903">Direct protein sequencing</keyword>
<keyword id="KW-1015">Disulfide bond</keyword>
<keyword id="KW-0872">Ion channel impairing toxin</keyword>
<keyword id="KW-0528">Neurotoxin</keyword>
<keyword id="KW-0629">Postsynaptic neurotoxin</keyword>
<keyword id="KW-0964">Secreted</keyword>
<keyword id="KW-0800">Toxin</keyword>
<feature type="peptide" id="PRO_0000044463" description="Alpha-conotoxin SIA">
    <location>
        <begin position="1"/>
        <end position="13"/>
    </location>
</feature>
<feature type="modified residue" description="Cysteine amide" evidence="2">
    <location>
        <position position="13"/>
    </location>
</feature>
<feature type="disulfide bond" evidence="1">
    <location>
        <begin position="2"/>
        <end position="7"/>
    </location>
</feature>
<feature type="disulfide bond" evidence="1">
    <location>
        <begin position="3"/>
        <end position="13"/>
    </location>
</feature>
<protein>
    <recommendedName>
        <fullName>Alpha-conotoxin SIA</fullName>
    </recommendedName>
    <alternativeName>
        <fullName>S1A</fullName>
    </alternativeName>
</protein>
<sequence>YCCHPACGKNFDC</sequence>
<dbReference type="PIR" id="A40312">
    <property type="entry name" value="NTKNAS"/>
</dbReference>
<dbReference type="ConoServer" id="25">
    <property type="toxin name" value="SIA"/>
</dbReference>
<dbReference type="GO" id="GO:0005576">
    <property type="term" value="C:extracellular region"/>
    <property type="evidence" value="ECO:0007669"/>
    <property type="project" value="UniProtKB-SubCell"/>
</dbReference>
<dbReference type="GO" id="GO:0035792">
    <property type="term" value="C:host cell postsynaptic membrane"/>
    <property type="evidence" value="ECO:0007669"/>
    <property type="project" value="UniProtKB-KW"/>
</dbReference>
<dbReference type="GO" id="GO:0030550">
    <property type="term" value="F:acetylcholine receptor inhibitor activity"/>
    <property type="evidence" value="ECO:0007669"/>
    <property type="project" value="UniProtKB-KW"/>
</dbReference>
<dbReference type="GO" id="GO:0099106">
    <property type="term" value="F:ion channel regulator activity"/>
    <property type="evidence" value="ECO:0007669"/>
    <property type="project" value="UniProtKB-KW"/>
</dbReference>
<dbReference type="GO" id="GO:0090729">
    <property type="term" value="F:toxin activity"/>
    <property type="evidence" value="ECO:0007669"/>
    <property type="project" value="UniProtKB-KW"/>
</dbReference>
<dbReference type="InterPro" id="IPR018072">
    <property type="entry name" value="Conotoxin_a-typ_CS"/>
</dbReference>
<dbReference type="PROSITE" id="PS60014">
    <property type="entry name" value="ALPHA_CONOTOXIN"/>
    <property type="match status" value="1"/>
</dbReference>
<proteinExistence type="evidence at protein level"/>
<accession>P28878</accession>
<evidence type="ECO:0000250" key="1">
    <source>
        <dbReference type="UniProtKB" id="P01519"/>
    </source>
</evidence>
<evidence type="ECO:0000269" key="2">
    <source>
    </source>
</evidence>
<evidence type="ECO:0000305" key="3"/>
<reference key="1">
    <citation type="journal article" date="1991" name="Biochemistry">
        <title>Alpha-conotoxins, small peptide probes of nicotinic acetylcholine receptors.</title>
        <authorList>
            <person name="Myers R.A."/>
            <person name="Zafarella G.C."/>
            <person name="Gray W.R."/>
            <person name="Abbot J."/>
            <person name="Cruz L.J."/>
            <person name="Olivera B.M."/>
        </authorList>
    </citation>
    <scope>PROTEIN SEQUENCE</scope>
    <scope>AMIDATION AT CYS-13</scope>
    <source>
        <tissue>Venom</tissue>
    </source>
</reference>
<name>CA1A_CONST</name>
<organism>
    <name type="scientific">Conus striatus</name>
    <name type="common">Striated cone</name>
    <dbReference type="NCBI Taxonomy" id="6493"/>
    <lineage>
        <taxon>Eukaryota</taxon>
        <taxon>Metazoa</taxon>
        <taxon>Spiralia</taxon>
        <taxon>Lophotrochozoa</taxon>
        <taxon>Mollusca</taxon>
        <taxon>Gastropoda</taxon>
        <taxon>Caenogastropoda</taxon>
        <taxon>Neogastropoda</taxon>
        <taxon>Conoidea</taxon>
        <taxon>Conidae</taxon>
        <taxon>Conus</taxon>
        <taxon>Pionoconus</taxon>
    </lineage>
</organism>
<comment type="function">
    <text>Alpha-conotoxins act on postsynaptic membranes, they bind to the nicotinic acetylcholine receptors (nAChR) and thus inhibit them. This toxin blocks muscular nAChR alpha-1/gamma subunits.</text>
</comment>
<comment type="subcellular location">
    <subcellularLocation>
        <location>Secreted</location>
    </subcellularLocation>
</comment>
<comment type="tissue specificity">
    <text>Expressed by the venom duct.</text>
</comment>
<comment type="domain">
    <text>The cysteine framework is I (CC-C-C). Alpha3/5 pattern.</text>
</comment>
<comment type="similarity">
    <text evidence="3">Belongs to the conotoxin A superfamily.</text>
</comment>